<evidence type="ECO:0000250" key="1"/>
<evidence type="ECO:0000255" key="2">
    <source>
        <dbReference type="PROSITE-ProRule" id="PRU10013"/>
    </source>
</evidence>
<evidence type="ECO:0000256" key="3">
    <source>
        <dbReference type="SAM" id="MobiDB-lite"/>
    </source>
</evidence>
<evidence type="ECO:0000305" key="4"/>
<sequence length="482" mass="54508">MNAMTNKTLTTAAGAPVADNNNTMTAGPRGPALLQDVWFLEKLAHFDRERIPERVVHAKGSGAYGTFTVTHDISRYTRARIFAEVGKQTPLFLRFSTVAGERGAADAERDVRGFAIKFYTDEGNWDLVGNNTPVFFIRDPLKFPDFIHTQKRDPKTNLRNATAAWDFWSLNPESLHQVTILMSDRGLPQNYRQQHGFGSHTYSFVNDAGERFYVKFHFKSQQGIACYTDGEAAELVGRDRESAQRDLFQNIEQGQFPRWTLKVQVMPEAEAATYHINPFDLTKVWPHADYPLIEVGVLELNKNPENYFAEVEQAAFTPANVVPGIGFSPDKMLQGRLFSYGDTHRYRLGINHHQIPVNAPRCPFHSFHRDGMGRVDGNGGATLNYEPNSFGEWREAKHAAEPPLALDGQAADRWNHRVDEDYYSQPGALFRLMNDDQKQQLFGNIGRHMAGVPEEIQRRQLEHFRRADPAYAAGVAKALGLK</sequence>
<dbReference type="EC" id="1.11.1.6"/>
<dbReference type="EMBL" id="BX640452">
    <property type="protein sequence ID" value="CAE35358.1"/>
    <property type="status" value="ALT_INIT"/>
    <property type="molecule type" value="Genomic_DNA"/>
</dbReference>
<dbReference type="SMR" id="P0A324"/>
<dbReference type="KEGG" id="bbr:BB4994"/>
<dbReference type="eggNOG" id="COG0753">
    <property type="taxonomic scope" value="Bacteria"/>
</dbReference>
<dbReference type="HOGENOM" id="CLU_010645_2_0_4"/>
<dbReference type="Proteomes" id="UP000001027">
    <property type="component" value="Chromosome"/>
</dbReference>
<dbReference type="GO" id="GO:0005737">
    <property type="term" value="C:cytoplasm"/>
    <property type="evidence" value="ECO:0007669"/>
    <property type="project" value="TreeGrafter"/>
</dbReference>
<dbReference type="GO" id="GO:0004096">
    <property type="term" value="F:catalase activity"/>
    <property type="evidence" value="ECO:0007669"/>
    <property type="project" value="UniProtKB-EC"/>
</dbReference>
<dbReference type="GO" id="GO:0020037">
    <property type="term" value="F:heme binding"/>
    <property type="evidence" value="ECO:0007669"/>
    <property type="project" value="InterPro"/>
</dbReference>
<dbReference type="GO" id="GO:0046872">
    <property type="term" value="F:metal ion binding"/>
    <property type="evidence" value="ECO:0007669"/>
    <property type="project" value="UniProtKB-KW"/>
</dbReference>
<dbReference type="GO" id="GO:0042744">
    <property type="term" value="P:hydrogen peroxide catabolic process"/>
    <property type="evidence" value="ECO:0007669"/>
    <property type="project" value="UniProtKB-KW"/>
</dbReference>
<dbReference type="GO" id="GO:0042542">
    <property type="term" value="P:response to hydrogen peroxide"/>
    <property type="evidence" value="ECO:0007669"/>
    <property type="project" value="TreeGrafter"/>
</dbReference>
<dbReference type="CDD" id="cd08156">
    <property type="entry name" value="catalase_clade_3"/>
    <property type="match status" value="1"/>
</dbReference>
<dbReference type="FunFam" id="2.40.180.10:FF:000001">
    <property type="entry name" value="Catalase"/>
    <property type="match status" value="1"/>
</dbReference>
<dbReference type="Gene3D" id="2.40.180.10">
    <property type="entry name" value="Catalase core domain"/>
    <property type="match status" value="1"/>
</dbReference>
<dbReference type="InterPro" id="IPR018028">
    <property type="entry name" value="Catalase"/>
</dbReference>
<dbReference type="InterPro" id="IPR040333">
    <property type="entry name" value="Catalase_3"/>
</dbReference>
<dbReference type="InterPro" id="IPR024708">
    <property type="entry name" value="Catalase_AS"/>
</dbReference>
<dbReference type="InterPro" id="IPR024711">
    <property type="entry name" value="Catalase_clade1/3"/>
</dbReference>
<dbReference type="InterPro" id="IPR011614">
    <property type="entry name" value="Catalase_core"/>
</dbReference>
<dbReference type="InterPro" id="IPR002226">
    <property type="entry name" value="Catalase_haem_BS"/>
</dbReference>
<dbReference type="InterPro" id="IPR010582">
    <property type="entry name" value="Catalase_immune_responsive"/>
</dbReference>
<dbReference type="InterPro" id="IPR020835">
    <property type="entry name" value="Catalase_sf"/>
</dbReference>
<dbReference type="PANTHER" id="PTHR11465">
    <property type="entry name" value="CATALASE"/>
    <property type="match status" value="1"/>
</dbReference>
<dbReference type="PANTHER" id="PTHR11465:SF61">
    <property type="entry name" value="CATALASE"/>
    <property type="match status" value="1"/>
</dbReference>
<dbReference type="Pfam" id="PF00199">
    <property type="entry name" value="Catalase"/>
    <property type="match status" value="1"/>
</dbReference>
<dbReference type="Pfam" id="PF06628">
    <property type="entry name" value="Catalase-rel"/>
    <property type="match status" value="1"/>
</dbReference>
<dbReference type="PIRSF" id="PIRSF038928">
    <property type="entry name" value="Catalase_clade1-3"/>
    <property type="match status" value="1"/>
</dbReference>
<dbReference type="PRINTS" id="PR00067">
    <property type="entry name" value="CATALASE"/>
</dbReference>
<dbReference type="SMART" id="SM01060">
    <property type="entry name" value="Catalase"/>
    <property type="match status" value="1"/>
</dbReference>
<dbReference type="SUPFAM" id="SSF56634">
    <property type="entry name" value="Heme-dependent catalase-like"/>
    <property type="match status" value="1"/>
</dbReference>
<dbReference type="PROSITE" id="PS00437">
    <property type="entry name" value="CATALASE_1"/>
    <property type="match status" value="1"/>
</dbReference>
<dbReference type="PROSITE" id="PS00438">
    <property type="entry name" value="CATALASE_2"/>
    <property type="match status" value="1"/>
</dbReference>
<dbReference type="PROSITE" id="PS51402">
    <property type="entry name" value="CATALASE_3"/>
    <property type="match status" value="1"/>
</dbReference>
<gene>
    <name type="primary">katA</name>
    <name type="ordered locus">BB4994</name>
</gene>
<feature type="chain" id="PRO_0000084977" description="Catalase">
    <location>
        <begin position="1"/>
        <end position="482"/>
    </location>
</feature>
<feature type="region of interest" description="Disordered" evidence="3">
    <location>
        <begin position="1"/>
        <end position="21"/>
    </location>
</feature>
<feature type="compositionally biased region" description="Polar residues" evidence="3">
    <location>
        <begin position="1"/>
        <end position="11"/>
    </location>
</feature>
<feature type="active site" evidence="2">
    <location>
        <position position="57"/>
    </location>
</feature>
<feature type="active site" evidence="2">
    <location>
        <position position="130"/>
    </location>
</feature>
<feature type="binding site" description="axial binding residue" evidence="1">
    <location>
        <position position="340"/>
    </location>
    <ligand>
        <name>heme</name>
        <dbReference type="ChEBI" id="CHEBI:30413"/>
    </ligand>
    <ligandPart>
        <name>Fe</name>
        <dbReference type="ChEBI" id="CHEBI:18248"/>
    </ligandPart>
</feature>
<reference key="1">
    <citation type="journal article" date="2003" name="Nat. Genet.">
        <title>Comparative analysis of the genome sequences of Bordetella pertussis, Bordetella parapertussis and Bordetella bronchiseptica.</title>
        <authorList>
            <person name="Parkhill J."/>
            <person name="Sebaihia M."/>
            <person name="Preston A."/>
            <person name="Murphy L.D."/>
            <person name="Thomson N.R."/>
            <person name="Harris D.E."/>
            <person name="Holden M.T.G."/>
            <person name="Churcher C.M."/>
            <person name="Bentley S.D."/>
            <person name="Mungall K.L."/>
            <person name="Cerdeno-Tarraga A.-M."/>
            <person name="Temple L."/>
            <person name="James K.D."/>
            <person name="Harris B."/>
            <person name="Quail M.A."/>
            <person name="Achtman M."/>
            <person name="Atkin R."/>
            <person name="Baker S."/>
            <person name="Basham D."/>
            <person name="Bason N."/>
            <person name="Cherevach I."/>
            <person name="Chillingworth T."/>
            <person name="Collins M."/>
            <person name="Cronin A."/>
            <person name="Davis P."/>
            <person name="Doggett J."/>
            <person name="Feltwell T."/>
            <person name="Goble A."/>
            <person name="Hamlin N."/>
            <person name="Hauser H."/>
            <person name="Holroyd S."/>
            <person name="Jagels K."/>
            <person name="Leather S."/>
            <person name="Moule S."/>
            <person name="Norberczak H."/>
            <person name="O'Neil S."/>
            <person name="Ormond D."/>
            <person name="Price C."/>
            <person name="Rabbinowitsch E."/>
            <person name="Rutter S."/>
            <person name="Sanders M."/>
            <person name="Saunders D."/>
            <person name="Seeger K."/>
            <person name="Sharp S."/>
            <person name="Simmonds M."/>
            <person name="Skelton J."/>
            <person name="Squares R."/>
            <person name="Squares S."/>
            <person name="Stevens K."/>
            <person name="Unwin L."/>
            <person name="Whitehead S."/>
            <person name="Barrell B.G."/>
            <person name="Maskell D.J."/>
        </authorList>
    </citation>
    <scope>NUCLEOTIDE SEQUENCE [LARGE SCALE GENOMIC DNA]</scope>
    <source>
        <strain>ATCC BAA-588 / NCTC 13252 / RB50</strain>
    </source>
</reference>
<protein>
    <recommendedName>
        <fullName>Catalase</fullName>
        <ecNumber>1.11.1.6</ecNumber>
    </recommendedName>
</protein>
<keyword id="KW-0349">Heme</keyword>
<keyword id="KW-0376">Hydrogen peroxide</keyword>
<keyword id="KW-0408">Iron</keyword>
<keyword id="KW-0479">Metal-binding</keyword>
<keyword id="KW-0560">Oxidoreductase</keyword>
<keyword id="KW-0575">Peroxidase</keyword>
<proteinExistence type="inferred from homology"/>
<accession>P0A324</accession>
<accession>P48062</accession>
<organism>
    <name type="scientific">Bordetella bronchiseptica (strain ATCC BAA-588 / NCTC 13252 / RB50)</name>
    <name type="common">Alcaligenes bronchisepticus</name>
    <dbReference type="NCBI Taxonomy" id="257310"/>
    <lineage>
        <taxon>Bacteria</taxon>
        <taxon>Pseudomonadati</taxon>
        <taxon>Pseudomonadota</taxon>
        <taxon>Betaproteobacteria</taxon>
        <taxon>Burkholderiales</taxon>
        <taxon>Alcaligenaceae</taxon>
        <taxon>Bordetella</taxon>
    </lineage>
</organism>
<comment type="function">
    <text evidence="1">Decomposes hydrogen peroxide into water and oxygen; serves to protect cells from the toxic effects of hydrogen peroxide.</text>
</comment>
<comment type="catalytic activity">
    <reaction evidence="2">
        <text>2 H2O2 = O2 + 2 H2O</text>
        <dbReference type="Rhea" id="RHEA:20309"/>
        <dbReference type="ChEBI" id="CHEBI:15377"/>
        <dbReference type="ChEBI" id="CHEBI:15379"/>
        <dbReference type="ChEBI" id="CHEBI:16240"/>
        <dbReference type="EC" id="1.11.1.6"/>
    </reaction>
</comment>
<comment type="cofactor">
    <cofactor evidence="1">
        <name>heme</name>
        <dbReference type="ChEBI" id="CHEBI:30413"/>
    </cofactor>
</comment>
<comment type="subunit">
    <text evidence="1">Homodimer.</text>
</comment>
<comment type="similarity">
    <text evidence="4">Belongs to the catalase family.</text>
</comment>
<comment type="sequence caution" evidence="4">
    <conflict type="erroneous initiation">
        <sequence resource="EMBL-CDS" id="CAE35358"/>
    </conflict>
</comment>
<name>CATA_BORBR</name>